<name>TYW1_PONAB</name>
<organism>
    <name type="scientific">Pongo abelii</name>
    <name type="common">Sumatran orangutan</name>
    <name type="synonym">Pongo pygmaeus abelii</name>
    <dbReference type="NCBI Taxonomy" id="9601"/>
    <lineage>
        <taxon>Eukaryota</taxon>
        <taxon>Metazoa</taxon>
        <taxon>Chordata</taxon>
        <taxon>Craniata</taxon>
        <taxon>Vertebrata</taxon>
        <taxon>Euteleostomi</taxon>
        <taxon>Mammalia</taxon>
        <taxon>Eutheria</taxon>
        <taxon>Euarchontoglires</taxon>
        <taxon>Primates</taxon>
        <taxon>Haplorrhini</taxon>
        <taxon>Catarrhini</taxon>
        <taxon>Hominidae</taxon>
        <taxon>Pongo</taxon>
    </lineage>
</organism>
<gene>
    <name type="primary">TYW1</name>
    <name type="synonym">RSAFD1</name>
</gene>
<protein>
    <recommendedName>
        <fullName>S-adenosyl-L-methionine-dependent tRNA 4-demethylwyosine synthase TYW1</fullName>
        <ecNumber>4.1.3.44</ecNumber>
    </recommendedName>
    <alternativeName>
        <fullName>Radical S-adenosyl methionine and flavodoxin domain-containing protein 1</fullName>
    </alternativeName>
    <alternativeName>
        <fullName>tRNA wybutosine-synthesizing protein 1 homolog</fullName>
    </alternativeName>
    <alternativeName>
        <fullName>tRNA-yW-synthesizing protein</fullName>
    </alternativeName>
</protein>
<feature type="chain" id="PRO_0000281829" description="S-adenosyl-L-methionine-dependent tRNA 4-demethylwyosine synthase TYW1">
    <location>
        <begin position="1"/>
        <end position="732"/>
    </location>
</feature>
<feature type="domain" description="Flavodoxin-like" evidence="3">
    <location>
        <begin position="79"/>
        <end position="237"/>
    </location>
</feature>
<feature type="domain" description="Radical SAM core" evidence="4">
    <location>
        <begin position="400"/>
        <end position="644"/>
    </location>
</feature>
<feature type="region of interest" description="Disordered" evidence="5">
    <location>
        <begin position="248"/>
        <end position="312"/>
    </location>
</feature>
<feature type="compositionally biased region" description="Basic and acidic residues" evidence="5">
    <location>
        <begin position="259"/>
        <end position="286"/>
    </location>
</feature>
<feature type="compositionally biased region" description="Acidic residues" evidence="5">
    <location>
        <begin position="287"/>
        <end position="299"/>
    </location>
</feature>
<feature type="binding site" evidence="3">
    <location>
        <begin position="85"/>
        <end position="89"/>
    </location>
    <ligand>
        <name>FMN</name>
        <dbReference type="ChEBI" id="CHEBI:58210"/>
    </ligand>
</feature>
<feature type="binding site" evidence="3">
    <location>
        <begin position="176"/>
        <end position="208"/>
    </location>
    <ligand>
        <name>FMN</name>
        <dbReference type="ChEBI" id="CHEBI:58210"/>
    </ligand>
</feature>
<feature type="binding site" evidence="2">
    <location>
        <position position="416"/>
    </location>
    <ligand>
        <name>[4Fe-4S] cluster</name>
        <dbReference type="ChEBI" id="CHEBI:49883"/>
        <note>4Fe-4S-S-AdoMet</note>
    </ligand>
</feature>
<feature type="binding site" evidence="2">
    <location>
        <position position="420"/>
    </location>
    <ligand>
        <name>[4Fe-4S] cluster</name>
        <dbReference type="ChEBI" id="CHEBI:49883"/>
        <note>4Fe-4S-S-AdoMet</note>
    </ligand>
</feature>
<feature type="binding site" evidence="2">
    <location>
        <position position="423"/>
    </location>
    <ligand>
        <name>[4Fe-4S] cluster</name>
        <dbReference type="ChEBI" id="CHEBI:49883"/>
        <note>4Fe-4S-S-AdoMet</note>
    </ligand>
</feature>
<keyword id="KW-0004">4Fe-4S</keyword>
<keyword id="KW-0408">Iron</keyword>
<keyword id="KW-0411">Iron-sulfur</keyword>
<keyword id="KW-0456">Lyase</keyword>
<keyword id="KW-0479">Metal-binding</keyword>
<keyword id="KW-0547">Nucleotide-binding</keyword>
<keyword id="KW-1185">Reference proteome</keyword>
<keyword id="KW-0949">S-adenosyl-L-methionine</keyword>
<keyword id="KW-0819">tRNA processing</keyword>
<evidence type="ECO:0000250" key="1"/>
<evidence type="ECO:0000255" key="2"/>
<evidence type="ECO:0000255" key="3">
    <source>
        <dbReference type="PROSITE-ProRule" id="PRU00088"/>
    </source>
</evidence>
<evidence type="ECO:0000255" key="4">
    <source>
        <dbReference type="PROSITE-ProRule" id="PRU01266"/>
    </source>
</evidence>
<evidence type="ECO:0000256" key="5">
    <source>
        <dbReference type="SAM" id="MobiDB-lite"/>
    </source>
</evidence>
<evidence type="ECO:0000305" key="6"/>
<accession>Q5REF9</accession>
<sequence length="732" mass="83712">MDPSMDTWDLSSPLISLWINRFYIYLGFAVSISLWICVQIVIKTQGRNLQEKSVPKAAQDLMTNGYVSLQEKDVFVSGVKIFYGSQTGTAKGFATVLAEAVTSLDLPVAIINLKEYDPDDHLIEEVTSKNVCVFLVATYTDGLPTESAEWFCKWLEEAAIDFRFGKTYLKGMRYAVFGLGNSAYASHFNKVGKNVDKWLWMLGAHRVMSRGEGDCDVVKSKHGSIEADFRAWKTKFISQLQALQKGERKKSCGGHCKKGKCESHQRGSEEREEGSHEQDELHHRDTEEEEPFESSSEEEFGGKDHQSLNSIVDVEDLGKIMDHVKKEKREKEQREEKSGLFRNMGRNEDGEIRAMITPALREALTKQGYQLIGSHSGVKLCRWTKSMLRGRGGCYKHTFYGIESHRCMETTPSLACANKCVFCWRHHTNPVGTEWRWKMDQPEMILKEAIENHQNMIKQFKGVPGVKAERFEEGMTVKHCALSLVGEPIMYPEINRFLKLLHQCKISSFLVTNAQFPAEIRNLEPVTQLYVSVDASTKDSLKKIDRPLFKDFWRRFLDSLKALAVKQQRTVYRLTLVKAWNVDELQAYAQLVSLGNPDFIEVKGVTYCGESSASSLTMAHVPWHEEVVQFVCELVDLIPDYEIACEHEHSNCLLIAHKKFKIGGEWWTWIDYNRFQELIQEYEDSSGSKTFSAKDYMARTPHWALFGANERGFDPKDTRHQRKNKSKAISGC</sequence>
<comment type="function">
    <text evidence="1">Probable component of the wybutosine biosynthesis pathway. Wybutosine is a hyper modified guanosine with a tricyclic base found at the 3'-position adjacent to the anticodon of eukaryotic phenylalanine tRNA. Catalyzes the condensation of N-methylguanine with 2 carbon atoms from pyruvate to form the tricyclic 4-demethylwyosine, an intermediate in wybutosine biosynthesis (By similarity).</text>
</comment>
<comment type="catalytic activity">
    <reaction>
        <text>N(1)-methylguanosine(37) in tRNA(Phe) + pyruvate + S-adenosyl-L-methionine = 4-demethylwyosine(37) in tRNA(Phe) + 5'-deoxyadenosine + L-methionine + CO2 + H2O</text>
        <dbReference type="Rhea" id="RHEA:36347"/>
        <dbReference type="Rhea" id="RHEA-COMP:10164"/>
        <dbReference type="Rhea" id="RHEA-COMP:10165"/>
        <dbReference type="ChEBI" id="CHEBI:15361"/>
        <dbReference type="ChEBI" id="CHEBI:15377"/>
        <dbReference type="ChEBI" id="CHEBI:16526"/>
        <dbReference type="ChEBI" id="CHEBI:17319"/>
        <dbReference type="ChEBI" id="CHEBI:57844"/>
        <dbReference type="ChEBI" id="CHEBI:59789"/>
        <dbReference type="ChEBI" id="CHEBI:64315"/>
        <dbReference type="ChEBI" id="CHEBI:73542"/>
        <dbReference type="EC" id="4.1.3.44"/>
    </reaction>
</comment>
<comment type="cofactor">
    <cofactor evidence="1">
        <name>[4Fe-4S] cluster</name>
        <dbReference type="ChEBI" id="CHEBI:49883"/>
    </cofactor>
    <text evidence="1">Binds 1 [4Fe-4S] cluster. The cluster is coordinated with 3 cysteines and an exchangeable S-adenosyl-L-methionine.</text>
</comment>
<comment type="pathway">
    <text>tRNA modification; wybutosine-tRNA(Phe) biosynthesis.</text>
</comment>
<comment type="similarity">
    <text evidence="6">Belongs to the TYW1 family.</text>
</comment>
<proteinExistence type="evidence at transcript level"/>
<reference key="1">
    <citation type="submission" date="2004-11" db="EMBL/GenBank/DDBJ databases">
        <authorList>
            <consortium name="The German cDNA consortium"/>
        </authorList>
    </citation>
    <scope>NUCLEOTIDE SEQUENCE [LARGE SCALE MRNA]</scope>
    <source>
        <tissue>Heart</tissue>
    </source>
</reference>
<dbReference type="EC" id="4.1.3.44"/>
<dbReference type="EMBL" id="CR857570">
    <property type="protein sequence ID" value="CAH89848.1"/>
    <property type="molecule type" value="mRNA"/>
</dbReference>
<dbReference type="RefSeq" id="NP_001124859.1">
    <property type="nucleotide sequence ID" value="NM_001131387.1"/>
</dbReference>
<dbReference type="SMR" id="Q5REF9"/>
<dbReference type="FunCoup" id="Q5REF9">
    <property type="interactions" value="2996"/>
</dbReference>
<dbReference type="STRING" id="9601.ENSPPYP00000019631"/>
<dbReference type="Ensembl" id="ENSPPYT00000020403.3">
    <property type="protein sequence ID" value="ENSPPYP00000019631.3"/>
    <property type="gene ID" value="ENSPPYG00000017514.3"/>
</dbReference>
<dbReference type="GeneID" id="100171721"/>
<dbReference type="KEGG" id="pon:100171721"/>
<dbReference type="CTD" id="55253"/>
<dbReference type="eggNOG" id="KOG1160">
    <property type="taxonomic scope" value="Eukaryota"/>
</dbReference>
<dbReference type="GeneTree" id="ENSGT00510000047059"/>
<dbReference type="InParanoid" id="Q5REF9"/>
<dbReference type="OMA" id="TMANIPW"/>
<dbReference type="OrthoDB" id="271553at2759"/>
<dbReference type="UniPathway" id="UPA00375"/>
<dbReference type="Proteomes" id="UP000001595">
    <property type="component" value="Chromosome 7"/>
</dbReference>
<dbReference type="GO" id="GO:0051539">
    <property type="term" value="F:4 iron, 4 sulfur cluster binding"/>
    <property type="evidence" value="ECO:0007669"/>
    <property type="project" value="UniProtKB-KW"/>
</dbReference>
<dbReference type="GO" id="GO:0010181">
    <property type="term" value="F:FMN binding"/>
    <property type="evidence" value="ECO:0007669"/>
    <property type="project" value="InterPro"/>
</dbReference>
<dbReference type="GO" id="GO:0046872">
    <property type="term" value="F:metal ion binding"/>
    <property type="evidence" value="ECO:0007669"/>
    <property type="project" value="UniProtKB-KW"/>
</dbReference>
<dbReference type="GO" id="GO:0102521">
    <property type="term" value="F:tRNA-4-demethylwyosine synthase activity"/>
    <property type="evidence" value="ECO:0007669"/>
    <property type="project" value="UniProtKB-EC"/>
</dbReference>
<dbReference type="GO" id="GO:0031591">
    <property type="term" value="P:wybutosine biosynthetic process"/>
    <property type="evidence" value="ECO:0007669"/>
    <property type="project" value="TreeGrafter"/>
</dbReference>
<dbReference type="CDD" id="cd01335">
    <property type="entry name" value="Radical_SAM"/>
    <property type="match status" value="1"/>
</dbReference>
<dbReference type="FunFam" id="3.20.20.70:FF:000196">
    <property type="entry name" value="S-adenosyl-L-methionine-dependent tRNA 4-demethylwyosine synthase"/>
    <property type="match status" value="1"/>
</dbReference>
<dbReference type="Gene3D" id="3.40.50.360">
    <property type="match status" value="1"/>
</dbReference>
<dbReference type="Gene3D" id="3.20.20.70">
    <property type="entry name" value="Aldolase class I"/>
    <property type="match status" value="1"/>
</dbReference>
<dbReference type="InterPro" id="IPR013785">
    <property type="entry name" value="Aldolase_TIM"/>
</dbReference>
<dbReference type="InterPro" id="IPR001094">
    <property type="entry name" value="Flavdoxin-like"/>
</dbReference>
<dbReference type="InterPro" id="IPR008254">
    <property type="entry name" value="Flavodoxin/NO_synth"/>
</dbReference>
<dbReference type="InterPro" id="IPR029039">
    <property type="entry name" value="Flavoprotein-like_sf"/>
</dbReference>
<dbReference type="InterPro" id="IPR007197">
    <property type="entry name" value="rSAM"/>
</dbReference>
<dbReference type="InterPro" id="IPR013917">
    <property type="entry name" value="tRNA_wybutosine-synth"/>
</dbReference>
<dbReference type="InterPro" id="IPR034556">
    <property type="entry name" value="tRNA_wybutosine-synthase"/>
</dbReference>
<dbReference type="PANTHER" id="PTHR13930">
    <property type="entry name" value="S-ADENOSYL-L-METHIONINE-DEPENDENT TRNA 4-DEMETHYLWYOSINE SYNTHASE"/>
    <property type="match status" value="1"/>
</dbReference>
<dbReference type="PANTHER" id="PTHR13930:SF0">
    <property type="entry name" value="S-ADENOSYL-L-METHIONINE-DEPENDENT TRNA 4-DEMETHYLWYOSINE SYNTHASE TYW1-RELATED"/>
    <property type="match status" value="1"/>
</dbReference>
<dbReference type="Pfam" id="PF00258">
    <property type="entry name" value="Flavodoxin_1"/>
    <property type="match status" value="1"/>
</dbReference>
<dbReference type="Pfam" id="PF04055">
    <property type="entry name" value="Radical_SAM"/>
    <property type="match status" value="1"/>
</dbReference>
<dbReference type="Pfam" id="PF08608">
    <property type="entry name" value="Wyosine_form"/>
    <property type="match status" value="1"/>
</dbReference>
<dbReference type="PRINTS" id="PR00369">
    <property type="entry name" value="FLAVODOXIN"/>
</dbReference>
<dbReference type="SFLD" id="SFLDS00029">
    <property type="entry name" value="Radical_SAM"/>
    <property type="match status" value="1"/>
</dbReference>
<dbReference type="SFLD" id="SFLDF00284">
    <property type="entry name" value="tRNA_wybutosine-synthesizing"/>
    <property type="match status" value="1"/>
</dbReference>
<dbReference type="SUPFAM" id="SSF52218">
    <property type="entry name" value="Flavoproteins"/>
    <property type="match status" value="1"/>
</dbReference>
<dbReference type="SUPFAM" id="SSF102114">
    <property type="entry name" value="Radical SAM enzymes"/>
    <property type="match status" value="1"/>
</dbReference>
<dbReference type="PROSITE" id="PS50902">
    <property type="entry name" value="FLAVODOXIN_LIKE"/>
    <property type="match status" value="1"/>
</dbReference>
<dbReference type="PROSITE" id="PS51918">
    <property type="entry name" value="RADICAL_SAM"/>
    <property type="match status" value="1"/>
</dbReference>